<evidence type="ECO:0000250" key="1"/>
<evidence type="ECO:0000256" key="2">
    <source>
        <dbReference type="SAM" id="MobiDB-lite"/>
    </source>
</evidence>
<evidence type="ECO:0000305" key="3"/>
<proteinExistence type="inferred from homology"/>
<feature type="chain" id="PRO_0000166859" description="Peptidyl-tRNA hydrolase ArfB">
    <location>
        <begin position="1"/>
        <end position="137"/>
    </location>
</feature>
<feature type="region of interest" description="Disordered" evidence="2">
    <location>
        <begin position="102"/>
        <end position="137"/>
    </location>
</feature>
<sequence>MLTISNNVHLPDAEIELTYIRAQGAGGQNVNKVSSAVHLRFDIPASSLPEFYKERLLALRDSRITGDGVLIIKAQQYRTQDQNRADALARLAELIIAAGKTEKKRRPTKPTLGSKTRRLEGKARRSTVKAGRGKVDF</sequence>
<organism>
    <name type="scientific">Pseudomonas putida</name>
    <name type="common">Arthrobacter siderocapsulatus</name>
    <dbReference type="NCBI Taxonomy" id="303"/>
    <lineage>
        <taxon>Bacteria</taxon>
        <taxon>Pseudomonadati</taxon>
        <taxon>Pseudomonadota</taxon>
        <taxon>Gammaproteobacteria</taxon>
        <taxon>Pseudomonadales</taxon>
        <taxon>Pseudomonadaceae</taxon>
        <taxon>Pseudomonas</taxon>
    </lineage>
</organism>
<accession>P45388</accession>
<protein>
    <recommendedName>
        <fullName>Peptidyl-tRNA hydrolase ArfB</fullName>
        <shortName>PTH</shortName>
        <ecNumber>3.1.1.29</ecNumber>
    </recommendedName>
    <alternativeName>
        <fullName>Alternative ribosome-rescue factor B</fullName>
    </alternativeName>
</protein>
<keyword id="KW-0963">Cytoplasm</keyword>
<keyword id="KW-0378">Hydrolase</keyword>
<keyword id="KW-0810">Translation regulation</keyword>
<gene>
    <name type="primary">arfB</name>
</gene>
<comment type="function">
    <text evidence="1">Rescues stalled ribosomes. Can hydrolyze peptidyl-tRNA on ribosomes stalled by both non-stop mRNAs and mRNAs that contain rare codon clusters (By similarity).</text>
</comment>
<comment type="catalytic activity">
    <reaction>
        <text>an N-acyl-L-alpha-aminoacyl-tRNA + H2O = an N-acyl-L-amino acid + a tRNA + H(+)</text>
        <dbReference type="Rhea" id="RHEA:54448"/>
        <dbReference type="Rhea" id="RHEA-COMP:10123"/>
        <dbReference type="Rhea" id="RHEA-COMP:13883"/>
        <dbReference type="ChEBI" id="CHEBI:15377"/>
        <dbReference type="ChEBI" id="CHEBI:15378"/>
        <dbReference type="ChEBI" id="CHEBI:59874"/>
        <dbReference type="ChEBI" id="CHEBI:78442"/>
        <dbReference type="ChEBI" id="CHEBI:138191"/>
        <dbReference type="EC" id="3.1.1.29"/>
    </reaction>
</comment>
<comment type="subunit">
    <text evidence="1">Associated with 70S ribosomes and polysomes.</text>
</comment>
<comment type="subcellular location">
    <subcellularLocation>
        <location evidence="1">Cytoplasm</location>
    </subcellularLocation>
</comment>
<comment type="similarity">
    <text evidence="3">Belongs to the prokaryotic/mitochondrial release factor family.</text>
</comment>
<dbReference type="EC" id="3.1.1.29"/>
<dbReference type="EMBL" id="M88763">
    <property type="status" value="NOT_ANNOTATED_CDS"/>
    <property type="molecule type" value="Genomic_DNA"/>
</dbReference>
<dbReference type="RefSeq" id="WP_016498873.1">
    <property type="nucleotide sequence ID" value="NZ_UGUX01000003.1"/>
</dbReference>
<dbReference type="SMR" id="P45388"/>
<dbReference type="GeneID" id="45523297"/>
<dbReference type="GO" id="GO:0005737">
    <property type="term" value="C:cytoplasm"/>
    <property type="evidence" value="ECO:0007669"/>
    <property type="project" value="UniProtKB-SubCell"/>
</dbReference>
<dbReference type="GO" id="GO:0004045">
    <property type="term" value="F:peptidyl-tRNA hydrolase activity"/>
    <property type="evidence" value="ECO:0007669"/>
    <property type="project" value="UniProtKB-EC"/>
</dbReference>
<dbReference type="GO" id="GO:0043022">
    <property type="term" value="F:ribosome binding"/>
    <property type="evidence" value="ECO:0007669"/>
    <property type="project" value="TreeGrafter"/>
</dbReference>
<dbReference type="GO" id="GO:0003747">
    <property type="term" value="F:translation release factor activity"/>
    <property type="evidence" value="ECO:0007669"/>
    <property type="project" value="InterPro"/>
</dbReference>
<dbReference type="GO" id="GO:0006417">
    <property type="term" value="P:regulation of translation"/>
    <property type="evidence" value="ECO:0007669"/>
    <property type="project" value="UniProtKB-KW"/>
</dbReference>
<dbReference type="GO" id="GO:0072344">
    <property type="term" value="P:rescue of stalled ribosome"/>
    <property type="evidence" value="ECO:0007669"/>
    <property type="project" value="TreeGrafter"/>
</dbReference>
<dbReference type="FunFam" id="3.30.160.20:FF:000029">
    <property type="entry name" value="Peptidyl-tRNA hydrolase YaeJ"/>
    <property type="match status" value="1"/>
</dbReference>
<dbReference type="Gene3D" id="3.30.160.20">
    <property type="match status" value="1"/>
</dbReference>
<dbReference type="InterPro" id="IPR000352">
    <property type="entry name" value="Pep_chain_release_fac_I"/>
</dbReference>
<dbReference type="InterPro" id="IPR045853">
    <property type="entry name" value="Pep_chain_release_fac_I_sf"/>
</dbReference>
<dbReference type="NCBIfam" id="NF006718">
    <property type="entry name" value="PRK09256.1"/>
    <property type="match status" value="1"/>
</dbReference>
<dbReference type="PANTHER" id="PTHR47814">
    <property type="entry name" value="PEPTIDYL-TRNA HYDROLASE ARFB"/>
    <property type="match status" value="1"/>
</dbReference>
<dbReference type="PANTHER" id="PTHR47814:SF1">
    <property type="entry name" value="PEPTIDYL-TRNA HYDROLASE ARFB"/>
    <property type="match status" value="1"/>
</dbReference>
<dbReference type="Pfam" id="PF00472">
    <property type="entry name" value="RF-1"/>
    <property type="match status" value="1"/>
</dbReference>
<dbReference type="SUPFAM" id="SSF75620">
    <property type="entry name" value="Release factor"/>
    <property type="match status" value="1"/>
</dbReference>
<dbReference type="PROSITE" id="PS00745">
    <property type="entry name" value="RF_PROK_I"/>
    <property type="match status" value="1"/>
</dbReference>
<name>ARFB_PSEPU</name>
<reference key="1">
    <citation type="journal article" date="1992" name="J. Bacteriol.">
        <title>Characterization of the genes encoding beta-ketoadipate: succinyl-coenzyme A transferase in Pseudomonas putida.</title>
        <authorList>
            <person name="Parales R.E."/>
            <person name="Harwood C.S."/>
        </authorList>
    </citation>
    <scope>NUCLEOTIDE SEQUENCE [GENOMIC DNA]</scope>
    <source>
        <strain>PRS2000</strain>
    </source>
</reference>